<proteinExistence type="inferred from homology"/>
<organism>
    <name type="scientific">Staphylococcus aureus (strain USA300 / TCH1516)</name>
    <dbReference type="NCBI Taxonomy" id="451516"/>
    <lineage>
        <taxon>Bacteria</taxon>
        <taxon>Bacillati</taxon>
        <taxon>Bacillota</taxon>
        <taxon>Bacilli</taxon>
        <taxon>Bacillales</taxon>
        <taxon>Staphylococcaceae</taxon>
        <taxon>Staphylococcus</taxon>
    </lineage>
</organism>
<gene>
    <name evidence="1" type="primary">hslU</name>
    <name type="ordered locus">USA300HOU_1185</name>
</gene>
<feature type="chain" id="PRO_1000078460" description="ATP-dependent protease ATPase subunit HslU">
    <location>
        <begin position="1"/>
        <end position="467"/>
    </location>
</feature>
<feature type="region of interest" description="Disordered" evidence="2">
    <location>
        <begin position="149"/>
        <end position="192"/>
    </location>
</feature>
<feature type="compositionally biased region" description="Basic and acidic residues" evidence="2">
    <location>
        <begin position="178"/>
        <end position="192"/>
    </location>
</feature>
<feature type="binding site" evidence="1">
    <location>
        <position position="22"/>
    </location>
    <ligand>
        <name>ATP</name>
        <dbReference type="ChEBI" id="CHEBI:30616"/>
    </ligand>
</feature>
<feature type="binding site" evidence="1">
    <location>
        <begin position="64"/>
        <end position="69"/>
    </location>
    <ligand>
        <name>ATP</name>
        <dbReference type="ChEBI" id="CHEBI:30616"/>
    </ligand>
</feature>
<feature type="binding site" evidence="1">
    <location>
        <position position="280"/>
    </location>
    <ligand>
        <name>ATP</name>
        <dbReference type="ChEBI" id="CHEBI:30616"/>
    </ligand>
</feature>
<feature type="binding site" evidence="1">
    <location>
        <position position="345"/>
    </location>
    <ligand>
        <name>ATP</name>
        <dbReference type="ChEBI" id="CHEBI:30616"/>
    </ligand>
</feature>
<feature type="binding site" evidence="1">
    <location>
        <position position="417"/>
    </location>
    <ligand>
        <name>ATP</name>
        <dbReference type="ChEBI" id="CHEBI:30616"/>
    </ligand>
</feature>
<keyword id="KW-0067">ATP-binding</keyword>
<keyword id="KW-0143">Chaperone</keyword>
<keyword id="KW-0963">Cytoplasm</keyword>
<keyword id="KW-0547">Nucleotide-binding</keyword>
<dbReference type="EMBL" id="CP000730">
    <property type="protein sequence ID" value="ABX29200.1"/>
    <property type="molecule type" value="Genomic_DNA"/>
</dbReference>
<dbReference type="RefSeq" id="WP_000379054.1">
    <property type="nucleotide sequence ID" value="NC_010079.1"/>
</dbReference>
<dbReference type="SMR" id="A8Z3T4"/>
<dbReference type="KEGG" id="sax:USA300HOU_1185"/>
<dbReference type="HOGENOM" id="CLU_033123_0_0_9"/>
<dbReference type="GO" id="GO:0009376">
    <property type="term" value="C:HslUV protease complex"/>
    <property type="evidence" value="ECO:0007669"/>
    <property type="project" value="UniProtKB-UniRule"/>
</dbReference>
<dbReference type="GO" id="GO:0005524">
    <property type="term" value="F:ATP binding"/>
    <property type="evidence" value="ECO:0007669"/>
    <property type="project" value="UniProtKB-UniRule"/>
</dbReference>
<dbReference type="GO" id="GO:0016887">
    <property type="term" value="F:ATP hydrolysis activity"/>
    <property type="evidence" value="ECO:0007669"/>
    <property type="project" value="InterPro"/>
</dbReference>
<dbReference type="GO" id="GO:0008233">
    <property type="term" value="F:peptidase activity"/>
    <property type="evidence" value="ECO:0007669"/>
    <property type="project" value="InterPro"/>
</dbReference>
<dbReference type="GO" id="GO:0036402">
    <property type="term" value="F:proteasome-activating activity"/>
    <property type="evidence" value="ECO:0007669"/>
    <property type="project" value="UniProtKB-UniRule"/>
</dbReference>
<dbReference type="GO" id="GO:0043335">
    <property type="term" value="P:protein unfolding"/>
    <property type="evidence" value="ECO:0007669"/>
    <property type="project" value="UniProtKB-UniRule"/>
</dbReference>
<dbReference type="GO" id="GO:0051603">
    <property type="term" value="P:proteolysis involved in protein catabolic process"/>
    <property type="evidence" value="ECO:0007669"/>
    <property type="project" value="TreeGrafter"/>
</dbReference>
<dbReference type="CDD" id="cd19498">
    <property type="entry name" value="RecA-like_HslU"/>
    <property type="match status" value="1"/>
</dbReference>
<dbReference type="FunFam" id="3.40.50.300:FF:000220">
    <property type="entry name" value="ATP-dependent protease ATPase subunit HslU"/>
    <property type="match status" value="1"/>
</dbReference>
<dbReference type="Gene3D" id="1.10.8.60">
    <property type="match status" value="1"/>
</dbReference>
<dbReference type="Gene3D" id="1.10.8.10">
    <property type="entry name" value="DNA helicase RuvA subunit, C-terminal domain"/>
    <property type="match status" value="1"/>
</dbReference>
<dbReference type="Gene3D" id="3.40.50.300">
    <property type="entry name" value="P-loop containing nucleotide triphosphate hydrolases"/>
    <property type="match status" value="2"/>
</dbReference>
<dbReference type="HAMAP" id="MF_00249">
    <property type="entry name" value="HslU"/>
    <property type="match status" value="1"/>
</dbReference>
<dbReference type="InterPro" id="IPR003593">
    <property type="entry name" value="AAA+_ATPase"/>
</dbReference>
<dbReference type="InterPro" id="IPR050052">
    <property type="entry name" value="ATP-dep_Clp_protease_ClpX"/>
</dbReference>
<dbReference type="InterPro" id="IPR003959">
    <property type="entry name" value="ATPase_AAA_core"/>
</dbReference>
<dbReference type="InterPro" id="IPR019489">
    <property type="entry name" value="Clp_ATPase_C"/>
</dbReference>
<dbReference type="InterPro" id="IPR004491">
    <property type="entry name" value="HslU"/>
</dbReference>
<dbReference type="InterPro" id="IPR027417">
    <property type="entry name" value="P-loop_NTPase"/>
</dbReference>
<dbReference type="NCBIfam" id="TIGR00390">
    <property type="entry name" value="hslU"/>
    <property type="match status" value="1"/>
</dbReference>
<dbReference type="NCBIfam" id="NF003544">
    <property type="entry name" value="PRK05201.1"/>
    <property type="match status" value="1"/>
</dbReference>
<dbReference type="PANTHER" id="PTHR48102">
    <property type="entry name" value="ATP-DEPENDENT CLP PROTEASE ATP-BINDING SUBUNIT CLPX-LIKE, MITOCHONDRIAL-RELATED"/>
    <property type="match status" value="1"/>
</dbReference>
<dbReference type="PANTHER" id="PTHR48102:SF3">
    <property type="entry name" value="ATP-DEPENDENT PROTEASE ATPASE SUBUNIT HSLU"/>
    <property type="match status" value="1"/>
</dbReference>
<dbReference type="Pfam" id="PF00004">
    <property type="entry name" value="AAA"/>
    <property type="match status" value="1"/>
</dbReference>
<dbReference type="Pfam" id="PF07724">
    <property type="entry name" value="AAA_2"/>
    <property type="match status" value="1"/>
</dbReference>
<dbReference type="Pfam" id="PF10431">
    <property type="entry name" value="ClpB_D2-small"/>
    <property type="match status" value="1"/>
</dbReference>
<dbReference type="SMART" id="SM00382">
    <property type="entry name" value="AAA"/>
    <property type="match status" value="1"/>
</dbReference>
<dbReference type="SMART" id="SM01086">
    <property type="entry name" value="ClpB_D2-small"/>
    <property type="match status" value="1"/>
</dbReference>
<dbReference type="SUPFAM" id="SSF52540">
    <property type="entry name" value="P-loop containing nucleoside triphosphate hydrolases"/>
    <property type="match status" value="1"/>
</dbReference>
<reference key="1">
    <citation type="journal article" date="2007" name="BMC Microbiol.">
        <title>Subtle genetic changes enhance virulence of methicillin resistant and sensitive Staphylococcus aureus.</title>
        <authorList>
            <person name="Highlander S.K."/>
            <person name="Hulten K.G."/>
            <person name="Qin X."/>
            <person name="Jiang H."/>
            <person name="Yerrapragada S."/>
            <person name="Mason E.O. Jr."/>
            <person name="Shang Y."/>
            <person name="Williams T.M."/>
            <person name="Fortunov R.M."/>
            <person name="Liu Y."/>
            <person name="Igboeli O."/>
            <person name="Petrosino J."/>
            <person name="Tirumalai M."/>
            <person name="Uzman A."/>
            <person name="Fox G.E."/>
            <person name="Cardenas A.M."/>
            <person name="Muzny D.M."/>
            <person name="Hemphill L."/>
            <person name="Ding Y."/>
            <person name="Dugan S."/>
            <person name="Blyth P.R."/>
            <person name="Buhay C.J."/>
            <person name="Dinh H.H."/>
            <person name="Hawes A.C."/>
            <person name="Holder M."/>
            <person name="Kovar C.L."/>
            <person name="Lee S.L."/>
            <person name="Liu W."/>
            <person name="Nazareth L.V."/>
            <person name="Wang Q."/>
            <person name="Zhou J."/>
            <person name="Kaplan S.L."/>
            <person name="Weinstock G.M."/>
        </authorList>
    </citation>
    <scope>NUCLEOTIDE SEQUENCE [LARGE SCALE GENOMIC DNA]</scope>
    <source>
        <strain>USA300 / TCH1516</strain>
    </source>
</reference>
<sequence>MDTAGIRLTPKEIVSKLNEYIVGQNDAKRKVAIALRNRYRRSLLDEESKQEISPKNILMIGPTGVGKTEIARRMAKVVGAPFIKVEATKFTEVGYVGRDVESMVRDLVDVSVRLVKAQKKSLVQDEATAKANEKLVKLLVPSMKKKASQTNNPLESLFGGAIPNFGQNNEDEEEPPTEEIKTKRSEIKRQLEEGKLEKEKVRIKVEQDPGALGMLGTNQNQQMQEMMNQLMPKKKVEREVAVETARKILADSYADELIDQESANQEALELAEQMGIIFIDEIDKVATNNHNSGQDVSRQGVQRDILPILEGSVIQTKYGTVNTEHMLFIGAGAFHVSKPSDLIPELQGRFPIRVELDSLSVEDFVRILTEPKLSLIKQYEALLQTEEVTVNFTDEAITRLAEIAYQVNQDTDNIGARRLHTILEKMLEDLSFEAPSMPNAVVDITPQYVDDKLKSISTNKDLSAFIL</sequence>
<accession>A8Z3T4</accession>
<name>HSLU_STAAT</name>
<protein>
    <recommendedName>
        <fullName evidence="1">ATP-dependent protease ATPase subunit HslU</fullName>
    </recommendedName>
    <alternativeName>
        <fullName evidence="1">Unfoldase HslU</fullName>
    </alternativeName>
</protein>
<comment type="function">
    <text evidence="1">ATPase subunit of a proteasome-like degradation complex; this subunit has chaperone activity. The binding of ATP and its subsequent hydrolysis by HslU are essential for unfolding of protein substrates subsequently hydrolyzed by HslV. HslU recognizes the N-terminal part of its protein substrates and unfolds these before they are guided to HslV for hydrolysis.</text>
</comment>
<comment type="subunit">
    <text evidence="1">A double ring-shaped homohexamer of HslV is capped on each side by a ring-shaped HslU homohexamer. The assembly of the HslU/HslV complex is dependent on binding of ATP.</text>
</comment>
<comment type="subcellular location">
    <subcellularLocation>
        <location evidence="1">Cytoplasm</location>
    </subcellularLocation>
</comment>
<comment type="similarity">
    <text evidence="1">Belongs to the ClpX chaperone family. HslU subfamily.</text>
</comment>
<evidence type="ECO:0000255" key="1">
    <source>
        <dbReference type="HAMAP-Rule" id="MF_00249"/>
    </source>
</evidence>
<evidence type="ECO:0000256" key="2">
    <source>
        <dbReference type="SAM" id="MobiDB-lite"/>
    </source>
</evidence>